<gene>
    <name type="primary">pyroxd1</name>
    <name type="ORF">DDB_G0289727</name>
</gene>
<accession>Q54H36</accession>
<name>PYRD1_DICDI</name>
<sequence>MTINQLIVIGGGIAGLTCAESYSHLKPNDKVTILSCSPILKTVCNVQKISKVLESFEVFETQFTDIEFKNPNISVIICDVDSIDINNRIVKTDKGNFKYDYLSICSGAKPNLVKESPYLIGIRDTETIVDLKNRLSNAKRIVIVGNGGIALELIHEIKNCQIIWSIKDKHIGNAFFDKDAADFLFRSKQIIDDDNHDKKNVVKEQQQQQQKDGILLNEDELIAKNQNISSQSNSSLYKSESGSALGPQWYSKYNFKTTDQYNKNNQEKKYNFNENVNIQYSTFLDEIYSNHDKKLNQEIINNNNNGDGDDKEDWPIYVKLSNGNLFGCNFIISATGVIPNSTILTKDNNNNNNNKIIKLSNEGAIIVDEQMKTSVDRIYSAGDVCSIEWSESEVWFQMRLWSQARTQGRYTAQCIANESVKNTPQQDNLDQICTNFEFELFAHATKFFGFKVIMLGLYNAQGLNLNLDNNNQNEENQDNIKIYTREIIGEQYVKVILKNGRLIGSLLIGDTDLEETFENLILNQIDLSGYGAEILNPEIDIEDYFD</sequence>
<comment type="cofactor">
    <cofactor evidence="1">
        <name>FAD</name>
        <dbReference type="ChEBI" id="CHEBI:57692"/>
    </cofactor>
    <text evidence="1">Binds 1 FAD per subunit.</text>
</comment>
<comment type="similarity">
    <text evidence="2">Belongs to the class-I pyridine nucleotide-disulfide oxidoreductase family. PYROXD1 subfamily.</text>
</comment>
<organism>
    <name type="scientific">Dictyostelium discoideum</name>
    <name type="common">Social amoeba</name>
    <dbReference type="NCBI Taxonomy" id="44689"/>
    <lineage>
        <taxon>Eukaryota</taxon>
        <taxon>Amoebozoa</taxon>
        <taxon>Evosea</taxon>
        <taxon>Eumycetozoa</taxon>
        <taxon>Dictyostelia</taxon>
        <taxon>Dictyosteliales</taxon>
        <taxon>Dictyosteliaceae</taxon>
        <taxon>Dictyostelium</taxon>
    </lineage>
</organism>
<protein>
    <recommendedName>
        <fullName>Pyridine nucleotide-disulfide oxidoreductase domain-containing protein 1</fullName>
        <ecNumber>1.8.1.-</ecNumber>
    </recommendedName>
</protein>
<dbReference type="EC" id="1.8.1.-"/>
<dbReference type="EMBL" id="AAFI02000148">
    <property type="protein sequence ID" value="EAL62575.1"/>
    <property type="molecule type" value="Genomic_DNA"/>
</dbReference>
<dbReference type="RefSeq" id="XP_636082.1">
    <property type="nucleotide sequence ID" value="XM_630990.1"/>
</dbReference>
<dbReference type="SMR" id="Q54H36"/>
<dbReference type="FunCoup" id="Q54H36">
    <property type="interactions" value="5"/>
</dbReference>
<dbReference type="STRING" id="44689.Q54H36"/>
<dbReference type="PaxDb" id="44689-DDB0305028"/>
<dbReference type="EnsemblProtists" id="EAL62575">
    <property type="protein sequence ID" value="EAL62575"/>
    <property type="gene ID" value="DDB_G0289727"/>
</dbReference>
<dbReference type="GeneID" id="8627294"/>
<dbReference type="KEGG" id="ddi:DDB_G0289727"/>
<dbReference type="dictyBase" id="DDB_G0289727">
    <property type="gene designation" value="pyroxd1"/>
</dbReference>
<dbReference type="VEuPathDB" id="AmoebaDB:DDB_G0289727"/>
<dbReference type="eggNOG" id="KOG2755">
    <property type="taxonomic scope" value="Eukaryota"/>
</dbReference>
<dbReference type="HOGENOM" id="CLU_026335_0_0_1"/>
<dbReference type="InParanoid" id="Q54H36"/>
<dbReference type="OMA" id="MCENLIL"/>
<dbReference type="PhylomeDB" id="Q54H36"/>
<dbReference type="PRO" id="PR:Q54H36"/>
<dbReference type="Proteomes" id="UP000002195">
    <property type="component" value="Chromosome 5"/>
</dbReference>
<dbReference type="GO" id="GO:0016491">
    <property type="term" value="F:oxidoreductase activity"/>
    <property type="evidence" value="ECO:0007669"/>
    <property type="project" value="UniProtKB-KW"/>
</dbReference>
<dbReference type="Gene3D" id="3.30.390.30">
    <property type="match status" value="1"/>
</dbReference>
<dbReference type="Gene3D" id="3.50.50.60">
    <property type="entry name" value="FAD/NAD(P)-binding domain"/>
    <property type="match status" value="3"/>
</dbReference>
<dbReference type="InterPro" id="IPR050260">
    <property type="entry name" value="FAD-bd_OxRdtase"/>
</dbReference>
<dbReference type="InterPro" id="IPR036188">
    <property type="entry name" value="FAD/NAD-bd_sf"/>
</dbReference>
<dbReference type="InterPro" id="IPR023753">
    <property type="entry name" value="FAD/NAD-binding_dom"/>
</dbReference>
<dbReference type="InterPro" id="IPR016156">
    <property type="entry name" value="FAD/NAD-linked_Rdtase_dimer_sf"/>
</dbReference>
<dbReference type="InterPro" id="IPR041575">
    <property type="entry name" value="Rubredoxin_C"/>
</dbReference>
<dbReference type="PANTHER" id="PTHR43429">
    <property type="entry name" value="PYRIDINE NUCLEOTIDE-DISULFIDE OXIDOREDUCTASE DOMAIN-CONTAINING"/>
    <property type="match status" value="1"/>
</dbReference>
<dbReference type="PANTHER" id="PTHR43429:SF2">
    <property type="entry name" value="PYRIDINE NUCLEOTIDE-DISULFIDE OXIDOREDUCTASE DOMAIN-CONTAINING PROTEIN 1"/>
    <property type="match status" value="1"/>
</dbReference>
<dbReference type="Pfam" id="PF07992">
    <property type="entry name" value="Pyr_redox_2"/>
    <property type="match status" value="2"/>
</dbReference>
<dbReference type="Pfam" id="PF18267">
    <property type="entry name" value="Rubredoxin_C"/>
    <property type="match status" value="1"/>
</dbReference>
<dbReference type="PRINTS" id="PR00368">
    <property type="entry name" value="FADPNR"/>
</dbReference>
<dbReference type="SUPFAM" id="SSF51905">
    <property type="entry name" value="FAD/NAD(P)-binding domain"/>
    <property type="match status" value="2"/>
</dbReference>
<reference key="1">
    <citation type="journal article" date="2005" name="Nature">
        <title>The genome of the social amoeba Dictyostelium discoideum.</title>
        <authorList>
            <person name="Eichinger L."/>
            <person name="Pachebat J.A."/>
            <person name="Gloeckner G."/>
            <person name="Rajandream M.A."/>
            <person name="Sucgang R."/>
            <person name="Berriman M."/>
            <person name="Song J."/>
            <person name="Olsen R."/>
            <person name="Szafranski K."/>
            <person name="Xu Q."/>
            <person name="Tunggal B."/>
            <person name="Kummerfeld S."/>
            <person name="Madera M."/>
            <person name="Konfortov B.A."/>
            <person name="Rivero F."/>
            <person name="Bankier A.T."/>
            <person name="Lehmann R."/>
            <person name="Hamlin N."/>
            <person name="Davies R."/>
            <person name="Gaudet P."/>
            <person name="Fey P."/>
            <person name="Pilcher K."/>
            <person name="Chen G."/>
            <person name="Saunders D."/>
            <person name="Sodergren E.J."/>
            <person name="Davis P."/>
            <person name="Kerhornou A."/>
            <person name="Nie X."/>
            <person name="Hall N."/>
            <person name="Anjard C."/>
            <person name="Hemphill L."/>
            <person name="Bason N."/>
            <person name="Farbrother P."/>
            <person name="Desany B."/>
            <person name="Just E."/>
            <person name="Morio T."/>
            <person name="Rost R."/>
            <person name="Churcher C.M."/>
            <person name="Cooper J."/>
            <person name="Haydock S."/>
            <person name="van Driessche N."/>
            <person name="Cronin A."/>
            <person name="Goodhead I."/>
            <person name="Muzny D.M."/>
            <person name="Mourier T."/>
            <person name="Pain A."/>
            <person name="Lu M."/>
            <person name="Harper D."/>
            <person name="Lindsay R."/>
            <person name="Hauser H."/>
            <person name="James K.D."/>
            <person name="Quiles M."/>
            <person name="Madan Babu M."/>
            <person name="Saito T."/>
            <person name="Buchrieser C."/>
            <person name="Wardroper A."/>
            <person name="Felder M."/>
            <person name="Thangavelu M."/>
            <person name="Johnson D."/>
            <person name="Knights A."/>
            <person name="Loulseged H."/>
            <person name="Mungall K.L."/>
            <person name="Oliver K."/>
            <person name="Price C."/>
            <person name="Quail M.A."/>
            <person name="Urushihara H."/>
            <person name="Hernandez J."/>
            <person name="Rabbinowitsch E."/>
            <person name="Steffen D."/>
            <person name="Sanders M."/>
            <person name="Ma J."/>
            <person name="Kohara Y."/>
            <person name="Sharp S."/>
            <person name="Simmonds M.N."/>
            <person name="Spiegler S."/>
            <person name="Tivey A."/>
            <person name="Sugano S."/>
            <person name="White B."/>
            <person name="Walker D."/>
            <person name="Woodward J.R."/>
            <person name="Winckler T."/>
            <person name="Tanaka Y."/>
            <person name="Shaulsky G."/>
            <person name="Schleicher M."/>
            <person name="Weinstock G.M."/>
            <person name="Rosenthal A."/>
            <person name="Cox E.C."/>
            <person name="Chisholm R.L."/>
            <person name="Gibbs R.A."/>
            <person name="Loomis W.F."/>
            <person name="Platzer M."/>
            <person name="Kay R.R."/>
            <person name="Williams J.G."/>
            <person name="Dear P.H."/>
            <person name="Noegel A.A."/>
            <person name="Barrell B.G."/>
            <person name="Kuspa A."/>
        </authorList>
    </citation>
    <scope>NUCLEOTIDE SEQUENCE [LARGE SCALE GENOMIC DNA]</scope>
    <source>
        <strain>AX4</strain>
    </source>
</reference>
<evidence type="ECO:0000250" key="1"/>
<evidence type="ECO:0000305" key="2"/>
<proteinExistence type="inferred from homology"/>
<feature type="chain" id="PRO_0000327424" description="Pyridine nucleotide-disulfide oxidoreductase domain-containing protein 1">
    <location>
        <begin position="1"/>
        <end position="546"/>
    </location>
</feature>
<keyword id="KW-0274">FAD</keyword>
<keyword id="KW-0285">Flavoprotein</keyword>
<keyword id="KW-0521">NADP</keyword>
<keyword id="KW-0560">Oxidoreductase</keyword>
<keyword id="KW-1185">Reference proteome</keyword>